<keyword id="KW-0067">ATP-binding</keyword>
<keyword id="KW-0106">Calcium</keyword>
<keyword id="KW-1003">Cell membrane</keyword>
<keyword id="KW-1015">Disulfide bond</keyword>
<keyword id="KW-0325">Glycoprotein</keyword>
<keyword id="KW-0378">Hydrolase</keyword>
<keyword id="KW-0460">Magnesium</keyword>
<keyword id="KW-0472">Membrane</keyword>
<keyword id="KW-0479">Metal-binding</keyword>
<keyword id="KW-0547">Nucleotide-binding</keyword>
<keyword id="KW-1185">Reference proteome</keyword>
<keyword id="KW-0812">Transmembrane</keyword>
<keyword id="KW-1133">Transmembrane helix</keyword>
<dbReference type="EC" id="3.6.1.5"/>
<dbReference type="EMBL" id="AY536920">
    <property type="protein sequence ID" value="AAT08794.1"/>
    <property type="molecule type" value="mRNA"/>
</dbReference>
<dbReference type="RefSeq" id="NP_001028737.1">
    <property type="nucleotide sequence ID" value="NM_001033565.1"/>
</dbReference>
<dbReference type="SMR" id="Q5DRK1"/>
<dbReference type="FunCoup" id="Q5DRK1">
    <property type="interactions" value="76"/>
</dbReference>
<dbReference type="STRING" id="10116.ENSRNOP00000012289"/>
<dbReference type="ChEMBL" id="CHEMBL4295846"/>
<dbReference type="GlyCosmos" id="Q5DRK1">
    <property type="glycosylation" value="3 sites, No reported glycans"/>
</dbReference>
<dbReference type="GlyGen" id="Q5DRK1">
    <property type="glycosylation" value="4 sites"/>
</dbReference>
<dbReference type="PhosphoSitePlus" id="Q5DRK1"/>
<dbReference type="PaxDb" id="10116-ENSRNOP00000012289"/>
<dbReference type="GeneID" id="613267"/>
<dbReference type="KEGG" id="rno:613267"/>
<dbReference type="UCSC" id="RGD:1561793">
    <property type="organism name" value="rat"/>
</dbReference>
<dbReference type="AGR" id="RGD:1561793"/>
<dbReference type="CTD" id="377841"/>
<dbReference type="RGD" id="1561793">
    <property type="gene designation" value="Entpd8"/>
</dbReference>
<dbReference type="eggNOG" id="KOG1386">
    <property type="taxonomic scope" value="Eukaryota"/>
</dbReference>
<dbReference type="InParanoid" id="Q5DRK1"/>
<dbReference type="PhylomeDB" id="Q5DRK1"/>
<dbReference type="BRENDA" id="3.6.1.5">
    <property type="organism ID" value="5301"/>
</dbReference>
<dbReference type="BRENDA" id="3.6.1.6">
    <property type="organism ID" value="5301"/>
</dbReference>
<dbReference type="Reactome" id="R-RNO-8850843">
    <property type="pathway name" value="Phosphate bond hydrolysis by NTPDase proteins"/>
</dbReference>
<dbReference type="SABIO-RK" id="Q5DRK1"/>
<dbReference type="PRO" id="PR:Q5DRK1"/>
<dbReference type="Proteomes" id="UP000002494">
    <property type="component" value="Unplaced"/>
</dbReference>
<dbReference type="GO" id="GO:0016020">
    <property type="term" value="C:membrane"/>
    <property type="evidence" value="ECO:0000266"/>
    <property type="project" value="RGD"/>
</dbReference>
<dbReference type="GO" id="GO:0005886">
    <property type="term" value="C:plasma membrane"/>
    <property type="evidence" value="ECO:0000318"/>
    <property type="project" value="GO_Central"/>
</dbReference>
<dbReference type="GO" id="GO:0004050">
    <property type="term" value="F:apyrase activity"/>
    <property type="evidence" value="ECO:0007669"/>
    <property type="project" value="UniProtKB-EC"/>
</dbReference>
<dbReference type="GO" id="GO:0005524">
    <property type="term" value="F:ATP binding"/>
    <property type="evidence" value="ECO:0007669"/>
    <property type="project" value="UniProtKB-KW"/>
</dbReference>
<dbReference type="GO" id="GO:0004382">
    <property type="term" value="F:GDP phosphatase activity"/>
    <property type="evidence" value="ECO:0000318"/>
    <property type="project" value="GO_Central"/>
</dbReference>
<dbReference type="GO" id="GO:0046872">
    <property type="term" value="F:metal ion binding"/>
    <property type="evidence" value="ECO:0007669"/>
    <property type="project" value="UniProtKB-KW"/>
</dbReference>
<dbReference type="GO" id="GO:0017110">
    <property type="term" value="F:nucleoside diphosphate phosphatase activity"/>
    <property type="evidence" value="ECO:0000266"/>
    <property type="project" value="RGD"/>
</dbReference>
<dbReference type="GO" id="GO:0017111">
    <property type="term" value="F:ribonucleoside triphosphate phosphatase activity"/>
    <property type="evidence" value="ECO:0000266"/>
    <property type="project" value="RGD"/>
</dbReference>
<dbReference type="GO" id="GO:0045134">
    <property type="term" value="F:UDP phosphatase activity"/>
    <property type="evidence" value="ECO:0000318"/>
    <property type="project" value="GO_Central"/>
</dbReference>
<dbReference type="GO" id="GO:0009133">
    <property type="term" value="P:nucleoside diphosphate biosynthetic process"/>
    <property type="evidence" value="ECO:0000266"/>
    <property type="project" value="RGD"/>
</dbReference>
<dbReference type="GO" id="GO:0009134">
    <property type="term" value="P:nucleoside diphosphate catabolic process"/>
    <property type="evidence" value="ECO:0000318"/>
    <property type="project" value="GO_Central"/>
</dbReference>
<dbReference type="GO" id="GO:0009124">
    <property type="term" value="P:nucleoside monophosphate biosynthetic process"/>
    <property type="evidence" value="ECO:0000266"/>
    <property type="project" value="RGD"/>
</dbReference>
<dbReference type="FunFam" id="3.30.420.150:FF:000002">
    <property type="entry name" value="Ectonucleoside triphosphate diphosphohydrolase 1"/>
    <property type="match status" value="1"/>
</dbReference>
<dbReference type="FunFam" id="3.30.420.40:FF:000068">
    <property type="entry name" value="Ectonucleoside triphosphate diphosphohydrolase 1"/>
    <property type="match status" value="1"/>
</dbReference>
<dbReference type="Gene3D" id="3.30.420.40">
    <property type="match status" value="1"/>
</dbReference>
<dbReference type="Gene3D" id="3.30.420.150">
    <property type="entry name" value="Exopolyphosphatase. Domain 2"/>
    <property type="match status" value="1"/>
</dbReference>
<dbReference type="InterPro" id="IPR000407">
    <property type="entry name" value="GDA1_CD39_NTPase"/>
</dbReference>
<dbReference type="PANTHER" id="PTHR11782">
    <property type="entry name" value="ADENOSINE/GUANOSINE DIPHOSPHATASE"/>
    <property type="match status" value="1"/>
</dbReference>
<dbReference type="PANTHER" id="PTHR11782:SF31">
    <property type="entry name" value="ECTONUCLEOSIDE TRIPHOSPHATE DIPHOSPHOHYDROLASE 8"/>
    <property type="match status" value="1"/>
</dbReference>
<dbReference type="Pfam" id="PF01150">
    <property type="entry name" value="GDA1_CD39"/>
    <property type="match status" value="1"/>
</dbReference>
<dbReference type="PROSITE" id="PS01238">
    <property type="entry name" value="GDA1_CD39_NTPASE"/>
    <property type="match status" value="1"/>
</dbReference>
<feature type="chain" id="PRO_0000306884" description="Ectonucleoside triphosphate diphosphohydrolase 8">
    <location>
        <begin position="1"/>
        <end position="494"/>
    </location>
</feature>
<feature type="topological domain" description="Cytoplasmic" evidence="3">
    <location>
        <begin position="1"/>
        <end position="8"/>
    </location>
</feature>
<feature type="transmembrane region" description="Helical" evidence="3">
    <location>
        <begin position="9"/>
        <end position="29"/>
    </location>
</feature>
<feature type="topological domain" description="Extracellular" evidence="3">
    <location>
        <begin position="30"/>
        <end position="465"/>
    </location>
</feature>
<feature type="transmembrane region" description="Helical" evidence="3">
    <location>
        <begin position="466"/>
        <end position="486"/>
    </location>
</feature>
<feature type="topological domain" description="Cytoplasmic" evidence="3">
    <location>
        <begin position="487"/>
        <end position="494"/>
    </location>
</feature>
<feature type="active site" description="Proton acceptor" evidence="2">
    <location>
        <position position="168"/>
    </location>
</feature>
<feature type="glycosylation site" description="N-linked (GlcNAc...) asparagine" evidence="3">
    <location>
        <position position="299"/>
    </location>
</feature>
<feature type="glycosylation site" description="N-linked (GlcNAc...) asparagine" evidence="3">
    <location>
        <position position="303"/>
    </location>
</feature>
<feature type="glycosylation site" description="N-linked (GlcNAc...) asparagine" evidence="3">
    <location>
        <position position="362"/>
    </location>
</feature>
<feature type="disulfide bond" evidence="1">
    <location>
        <begin position="78"/>
        <end position="102"/>
    </location>
</feature>
<feature type="disulfide bond" evidence="1">
    <location>
        <begin position="245"/>
        <end position="291"/>
    </location>
</feature>
<feature type="disulfide bond" evidence="1">
    <location>
        <begin position="328"/>
        <end position="334"/>
    </location>
</feature>
<feature type="disulfide bond" evidence="1">
    <location>
        <begin position="380"/>
        <end position="402"/>
    </location>
</feature>
<accession>Q5DRK1</accession>
<comment type="function">
    <text evidence="1">Canalicular ectonucleoside NTPDase responsible for the main hepatic NTPDase activity. Ectonucleoside NTPDases catalyze the hydrolysis of gamma- and beta-phosphate residues of nucleotides, playing a central role in concentration of extracellular nucleotides. Has activity toward ATP, ADP, UTP and UDP, but not toward AMP (By similarity).</text>
</comment>
<comment type="catalytic activity">
    <reaction>
        <text>a ribonucleoside 5'-triphosphate + 2 H2O = a ribonucleoside 5'-phosphate + 2 phosphate + 2 H(+)</text>
        <dbReference type="Rhea" id="RHEA:36795"/>
        <dbReference type="ChEBI" id="CHEBI:15377"/>
        <dbReference type="ChEBI" id="CHEBI:15378"/>
        <dbReference type="ChEBI" id="CHEBI:43474"/>
        <dbReference type="ChEBI" id="CHEBI:58043"/>
        <dbReference type="ChEBI" id="CHEBI:61557"/>
        <dbReference type="EC" id="3.6.1.5"/>
    </reaction>
</comment>
<comment type="cofactor">
    <cofactor evidence="1">
        <name>Ca(2+)</name>
        <dbReference type="ChEBI" id="CHEBI:29108"/>
    </cofactor>
    <cofactor evidence="1">
        <name>Mg(2+)</name>
        <dbReference type="ChEBI" id="CHEBI:18420"/>
    </cofactor>
    <text evidence="1">Ca(2+) or Mg(2+). Has lower efficiency with Mg(2+).</text>
</comment>
<comment type="subcellular location">
    <subcellularLocation>
        <location evidence="4">Cell membrane</location>
        <topology evidence="4">Multi-pass membrane protein</topology>
    </subcellularLocation>
</comment>
<comment type="tissue specificity">
    <text evidence="4">Present in liver, and at lower level in jejunum and kidney. Limited to the canalicular domain of hepatocytes (at protein level).</text>
</comment>
<comment type="domain">
    <text evidence="1">The transmembranous domains are involved in regulation of enzyme activity.</text>
</comment>
<comment type="PTM">
    <text evidence="1">N-glycosylated.</text>
</comment>
<comment type="similarity">
    <text evidence="5">Belongs to the GDA1/CD39 NTPase family.</text>
</comment>
<reference key="1">
    <citation type="journal article" date="2007" name="Am. J. Physiol.">
        <title>Cloning, purification, and identification of the liver canalicular ecto-ATPase as NTPDase8.</title>
        <authorList>
            <person name="Fausther M."/>
            <person name="Lecka J."/>
            <person name="Kukulski F."/>
            <person name="Levesque S.A."/>
            <person name="Pelletier J."/>
            <person name="Zimmermann H."/>
            <person name="Dranoff J.A."/>
            <person name="Sevigny J."/>
        </authorList>
    </citation>
    <scope>NUCLEOTIDE SEQUENCE [MRNA]</scope>
    <scope>SUBCELLULAR LOCATION</scope>
    <scope>TISSUE SPECIFICITY</scope>
    <source>
        <tissue>Liver</tissue>
    </source>
</reference>
<organism>
    <name type="scientific">Rattus norvegicus</name>
    <name type="common">Rat</name>
    <dbReference type="NCBI Taxonomy" id="10116"/>
    <lineage>
        <taxon>Eukaryota</taxon>
        <taxon>Metazoa</taxon>
        <taxon>Chordata</taxon>
        <taxon>Craniata</taxon>
        <taxon>Vertebrata</taxon>
        <taxon>Euteleostomi</taxon>
        <taxon>Mammalia</taxon>
        <taxon>Eutheria</taxon>
        <taxon>Euarchontoglires</taxon>
        <taxon>Glires</taxon>
        <taxon>Rodentia</taxon>
        <taxon>Myomorpha</taxon>
        <taxon>Muroidea</taxon>
        <taxon>Muridae</taxon>
        <taxon>Murinae</taxon>
        <taxon>Rattus</taxon>
    </lineage>
</organism>
<sequence>MRLSWKERVFMVLLGVAAASGLTMLILILVKATNVLLPADTKFGILFDAGSSHTSLFVYQWPANKEKDTGVVSQALACQVEGPGISSYTSDPTQAGESLKSCLQEALALIPQTQHPVTPAFLGATAGMRLLSQKNSSQAQDILAAVSQTLSRAPVDFWGARILAGQDEGAFGWITVNYVLGMLLKYSSGQWILPEDGTLVGALDLGGASTQISFVPQGPILDQSTQVTFRLYGANYSVYTHSYLCFGRDQILRRLLAELVQSSQVARVRHPCYHSGYQATLSLASLYDSPCVHTPDSLNYTQNLTVEGIGNPGNCVAALRGLFNFSSCKGQEDCAFNGVYQPPVHGQFYAFSNFYYTFQFLNLTSRQPLNIVNDTIWKFCQKPWRLVEDSYPGQERWLRDYCASGLYILVLLLEGYKFSEETWPNIQFQKQAGGTDIGWTLGFMLNLTGMIPAEALTQWRAQSYSIWIAGVVFAVLTLVAILGAAAVQLFWTQD</sequence>
<name>ENTP8_RAT</name>
<protein>
    <recommendedName>
        <fullName>Ectonucleoside triphosphate diphosphohydrolase 8</fullName>
        <shortName>E-NTPDase 8</shortName>
        <shortName>NTPDase 8</shortName>
        <shortName>NTPDase8</shortName>
        <ecNumber>3.6.1.5</ecNumber>
    </recommendedName>
</protein>
<gene>
    <name type="primary">Entpd8</name>
</gene>
<proteinExistence type="evidence at protein level"/>
<evidence type="ECO:0000250" key="1"/>
<evidence type="ECO:0000250" key="2">
    <source>
        <dbReference type="UniProtKB" id="O35795"/>
    </source>
</evidence>
<evidence type="ECO:0000255" key="3"/>
<evidence type="ECO:0000269" key="4">
    <source>
    </source>
</evidence>
<evidence type="ECO:0000305" key="5"/>